<comment type="function">
    <text evidence="1">Mitochondrial and calcium-binding carrier that catalyzes the calcium-dependent exchange of cytoplasmic glutamate with mitochondrial aspartate across the mitochondrial inner membrane.</text>
</comment>
<comment type="subunit">
    <text evidence="1">Homodimer (via N-terminus).</text>
</comment>
<comment type="subcellular location">
    <subcellularLocation>
        <location evidence="1">Mitochondrion inner membrane</location>
        <topology evidence="1">Multi-pass membrane protein</topology>
    </subcellularLocation>
</comment>
<comment type="alternative products">
    <event type="alternative splicing"/>
    <isoform>
        <id>Q21153-1</id>
        <name>b</name>
        <sequence type="displayed"/>
    </isoform>
    <isoform>
        <id>Q21153-2</id>
        <name>a</name>
        <sequence type="described" ref="VSP_053225"/>
    </isoform>
</comment>
<comment type="domain">
    <text evidence="1">Upon calcium binding, the EF-hand-containing regulatory N-terminal domain binds to the C-terminal domain, opening a vestibule which allows the substrates to be translocated through the carrier domain. In the absence of calcium, the linker loop domain may close the vestibule, which may prevent substrates from entering the carrier domain.</text>
</comment>
<comment type="miscellaneous">
    <text evidence="1">Binds to one calcium ion with high affinity.</text>
</comment>
<comment type="similarity">
    <text evidence="4">Belongs to the mitochondrial carrier (TC 2.A.29) family.</text>
</comment>
<sequence>MSFDHLLTSSKRRELLQNLGIGHGSDVFSTGLFRKAECNAETAISQRSIPRANPDHLRPIFDRFATKEIKGKKLMTPEDFIRGYLGLYTEENYNKETVRLLASAADTTKDGDISFEEFCAFEALLCSPDALYLTAFELFDRNASDTISCDEFEAVIRHTQPLHDQDFDFSSEFIKRYFGADKQRNVNYHSFCQLLHDFYEEQGIQAFKRYDKNGNGTISSLDFQQIMTTVKGHLLTDFVRHNLIAVSGGGASGHKFSDTRGGFVTFPYYAAFNSLLAKMELIKRVYVSTTRGNLDIEMTKEEFLHAIQSYTQVTPYEVEILFHLSELNHPGRKTLCLKDIQAIDPERLKRVSQMDRLINIKAVHHKDDRGVGTAFLESAYRFLLGSVAGACGATAVYPIDLVKTRMQNQRTSGSFVGEVMYKNSLDCFKKVVKFEGLLGLYRGLLPQIVGVAPEKAIKLTMNDYMRDKFTKDGKIPLYGEIIAGGTGGMCQVVFTNPLEIVKIRLQTAGEVQQAGKKIGVFTVLKELGFLGLYKGSRACFLRDIPFSAIYFPAYAHAKLASADEDGMNSPGTLFASAFIAGVPAAGLVTPADVIKTRLQVAARAGQTTYNGVIDCARKLIKEEGPMSLWKGTAARVCRSSPQFAVTLLTYEVLQRLFYVDFAGSRPTGSELATTKTIQDESSTNPDHVGGYKLAAATFSGIEHKFGLFLPKFETSK</sequence>
<accession>Q21153</accession>
<accession>L8E976</accession>
<keyword id="KW-0025">Alternative splicing</keyword>
<keyword id="KW-0106">Calcium</keyword>
<keyword id="KW-0472">Membrane</keyword>
<keyword id="KW-0479">Metal-binding</keyword>
<keyword id="KW-0496">Mitochondrion</keyword>
<keyword id="KW-0999">Mitochondrion inner membrane</keyword>
<keyword id="KW-1185">Reference proteome</keyword>
<keyword id="KW-0677">Repeat</keyword>
<keyword id="KW-0812">Transmembrane</keyword>
<keyword id="KW-1133">Transmembrane helix</keyword>
<keyword id="KW-0813">Transport</keyword>
<name>CMC1_CAEEL</name>
<reference key="1">
    <citation type="journal article" date="1998" name="Science">
        <title>Genome sequence of the nematode C. elegans: a platform for investigating biology.</title>
        <authorList>
            <consortium name="The C. elegans sequencing consortium"/>
        </authorList>
    </citation>
    <scope>NUCLEOTIDE SEQUENCE [LARGE SCALE GENOMIC DNA]</scope>
    <source>
        <strain>Bristol N2</strain>
    </source>
</reference>
<protein>
    <recommendedName>
        <fullName>Probable calcium-binding mitochondrial carrier K02F3.2</fullName>
    </recommendedName>
</protein>
<dbReference type="EMBL" id="FO080195">
    <property type="protein sequence ID" value="CCD61871.2"/>
    <property type="molecule type" value="Genomic_DNA"/>
</dbReference>
<dbReference type="EMBL" id="FO080195">
    <property type="protein sequence ID" value="CCQ25712.1"/>
    <property type="molecule type" value="Genomic_DNA"/>
</dbReference>
<dbReference type="PIR" id="T16533">
    <property type="entry name" value="T16533"/>
</dbReference>
<dbReference type="RefSeq" id="NP_001263698.1">
    <molecule id="Q21153-1"/>
    <property type="nucleotide sequence ID" value="NM_001276769.4"/>
</dbReference>
<dbReference type="RefSeq" id="NP_497274.3">
    <molecule id="Q21153-2"/>
    <property type="nucleotide sequence ID" value="NM_064873.6"/>
</dbReference>
<dbReference type="SMR" id="Q21153"/>
<dbReference type="BioGRID" id="40511">
    <property type="interactions" value="12"/>
</dbReference>
<dbReference type="FunCoup" id="Q21153">
    <property type="interactions" value="1702"/>
</dbReference>
<dbReference type="STRING" id="6239.K02F3.2b.1"/>
<dbReference type="PaxDb" id="6239-K02F3.2b"/>
<dbReference type="PeptideAtlas" id="Q21153"/>
<dbReference type="EnsemblMetazoa" id="K02F3.2a.1">
    <molecule id="Q21153-2"/>
    <property type="protein sequence ID" value="K02F3.2a.1"/>
    <property type="gene ID" value="WBGene00019326"/>
</dbReference>
<dbReference type="EnsemblMetazoa" id="K02F3.2b.1">
    <molecule id="Q21153-1"/>
    <property type="protein sequence ID" value="K02F3.2b.1"/>
    <property type="gene ID" value="WBGene00019326"/>
</dbReference>
<dbReference type="GeneID" id="175242"/>
<dbReference type="KEGG" id="cel:CELE_K02F3.2"/>
<dbReference type="UCSC" id="K02F3.2">
    <molecule id="Q21153-1"/>
    <property type="organism name" value="c. elegans"/>
</dbReference>
<dbReference type="AGR" id="WB:WBGene00019326"/>
<dbReference type="CTD" id="175242"/>
<dbReference type="WormBase" id="K02F3.2a">
    <molecule id="Q21153-2"/>
    <property type="protein sequence ID" value="CE48021"/>
    <property type="gene ID" value="WBGene00019326"/>
</dbReference>
<dbReference type="WormBase" id="K02F3.2b">
    <molecule id="Q21153-1"/>
    <property type="protein sequence ID" value="CE48184"/>
    <property type="gene ID" value="WBGene00019326"/>
</dbReference>
<dbReference type="eggNOG" id="KOG0751">
    <property type="taxonomic scope" value="Eukaryota"/>
</dbReference>
<dbReference type="GeneTree" id="ENSGT00940000155963"/>
<dbReference type="InParanoid" id="Q21153"/>
<dbReference type="OMA" id="AFQNVMR"/>
<dbReference type="OrthoDB" id="2161at2759"/>
<dbReference type="Reactome" id="R-CEL-8963693">
    <property type="pathway name" value="Aspartate and asparagine metabolism"/>
</dbReference>
<dbReference type="Reactome" id="R-CEL-9856872">
    <property type="pathway name" value="Malate-aspartate shuttle"/>
</dbReference>
<dbReference type="PRO" id="PR:Q21153"/>
<dbReference type="Proteomes" id="UP000001940">
    <property type="component" value="Chromosome III"/>
</dbReference>
<dbReference type="Bgee" id="WBGene00019326">
    <property type="expression patterns" value="Expressed in larva and 3 other cell types or tissues"/>
</dbReference>
<dbReference type="GO" id="GO:0005743">
    <property type="term" value="C:mitochondrial inner membrane"/>
    <property type="evidence" value="ECO:0007669"/>
    <property type="project" value="UniProtKB-SubCell"/>
</dbReference>
<dbReference type="GO" id="GO:0005509">
    <property type="term" value="F:calcium ion binding"/>
    <property type="evidence" value="ECO:0000250"/>
    <property type="project" value="UniProtKB"/>
</dbReference>
<dbReference type="GO" id="GO:0042802">
    <property type="term" value="F:identical protein binding"/>
    <property type="evidence" value="ECO:0000250"/>
    <property type="project" value="UniProtKB"/>
</dbReference>
<dbReference type="GO" id="GO:0015183">
    <property type="term" value="F:L-aspartate transmembrane transporter activity"/>
    <property type="evidence" value="ECO:0000318"/>
    <property type="project" value="GO_Central"/>
</dbReference>
<dbReference type="GO" id="GO:0005313">
    <property type="term" value="F:L-glutamate transmembrane transporter activity"/>
    <property type="evidence" value="ECO:0000318"/>
    <property type="project" value="GO_Central"/>
</dbReference>
<dbReference type="GO" id="GO:0015810">
    <property type="term" value="P:aspartate transmembrane transport"/>
    <property type="evidence" value="ECO:0000318"/>
    <property type="project" value="GO_Central"/>
</dbReference>
<dbReference type="GO" id="GO:0015813">
    <property type="term" value="P:L-glutamate transmembrane transport"/>
    <property type="evidence" value="ECO:0000318"/>
    <property type="project" value="GO_Central"/>
</dbReference>
<dbReference type="GO" id="GO:0043490">
    <property type="term" value="P:malate-aspartate shuttle"/>
    <property type="evidence" value="ECO:0000318"/>
    <property type="project" value="GO_Central"/>
</dbReference>
<dbReference type="FunFam" id="1.10.238.10:FF:000396">
    <property type="entry name" value="Calcium-binding mitochondrial carrier protein Aralar1"/>
    <property type="match status" value="1"/>
</dbReference>
<dbReference type="FunFam" id="1.50.40.10:FF:000004">
    <property type="entry name" value="Calcium-binding mitochondrial carrier protein Aralar1"/>
    <property type="match status" value="1"/>
</dbReference>
<dbReference type="Gene3D" id="1.10.238.10">
    <property type="entry name" value="EF-hand"/>
    <property type="match status" value="2"/>
</dbReference>
<dbReference type="Gene3D" id="1.50.40.10">
    <property type="entry name" value="Mitochondrial carrier domain"/>
    <property type="match status" value="1"/>
</dbReference>
<dbReference type="InterPro" id="IPR011992">
    <property type="entry name" value="EF-hand-dom_pair"/>
</dbReference>
<dbReference type="InterPro" id="IPR018247">
    <property type="entry name" value="EF_Hand_1_Ca_BS"/>
</dbReference>
<dbReference type="InterPro" id="IPR002048">
    <property type="entry name" value="EF_hand_dom"/>
</dbReference>
<dbReference type="InterPro" id="IPR002067">
    <property type="entry name" value="Mit_carrier"/>
</dbReference>
<dbReference type="InterPro" id="IPR051028">
    <property type="entry name" value="Mito_Solute_Carrier"/>
</dbReference>
<dbReference type="InterPro" id="IPR018108">
    <property type="entry name" value="Mitochondrial_sb/sol_carrier"/>
</dbReference>
<dbReference type="InterPro" id="IPR023395">
    <property type="entry name" value="Mt_carrier_dom_sf"/>
</dbReference>
<dbReference type="PANTHER" id="PTHR45678:SF9">
    <property type="entry name" value="CALCIUM-BINDING MITOCHONDRIAL CARRIER PROTEIN ARALAR1"/>
    <property type="match status" value="1"/>
</dbReference>
<dbReference type="PANTHER" id="PTHR45678">
    <property type="entry name" value="MITOCHONDRIAL 2-OXODICARBOXYLATE CARRIER 1-RELATED"/>
    <property type="match status" value="1"/>
</dbReference>
<dbReference type="Pfam" id="PF13405">
    <property type="entry name" value="EF-hand_6"/>
    <property type="match status" value="1"/>
</dbReference>
<dbReference type="Pfam" id="PF13833">
    <property type="entry name" value="EF-hand_8"/>
    <property type="match status" value="1"/>
</dbReference>
<dbReference type="Pfam" id="PF00153">
    <property type="entry name" value="Mito_carr"/>
    <property type="match status" value="3"/>
</dbReference>
<dbReference type="PRINTS" id="PR00926">
    <property type="entry name" value="MITOCARRIER"/>
</dbReference>
<dbReference type="SMART" id="SM00054">
    <property type="entry name" value="EFh"/>
    <property type="match status" value="3"/>
</dbReference>
<dbReference type="SUPFAM" id="SSF47473">
    <property type="entry name" value="EF-hand"/>
    <property type="match status" value="3"/>
</dbReference>
<dbReference type="SUPFAM" id="SSF103506">
    <property type="entry name" value="Mitochondrial carrier"/>
    <property type="match status" value="1"/>
</dbReference>
<dbReference type="PROSITE" id="PS00018">
    <property type="entry name" value="EF_HAND_1"/>
    <property type="match status" value="2"/>
</dbReference>
<dbReference type="PROSITE" id="PS50222">
    <property type="entry name" value="EF_HAND_2"/>
    <property type="match status" value="3"/>
</dbReference>
<dbReference type="PROSITE" id="PS50920">
    <property type="entry name" value="SOLCAR"/>
    <property type="match status" value="3"/>
</dbReference>
<organism>
    <name type="scientific">Caenorhabditis elegans</name>
    <dbReference type="NCBI Taxonomy" id="6239"/>
    <lineage>
        <taxon>Eukaryota</taxon>
        <taxon>Metazoa</taxon>
        <taxon>Ecdysozoa</taxon>
        <taxon>Nematoda</taxon>
        <taxon>Chromadorea</taxon>
        <taxon>Rhabditida</taxon>
        <taxon>Rhabditina</taxon>
        <taxon>Rhabditomorpha</taxon>
        <taxon>Rhabditoidea</taxon>
        <taxon>Rhabditidae</taxon>
        <taxon>Peloderinae</taxon>
        <taxon>Caenorhabditis</taxon>
    </lineage>
</organism>
<evidence type="ECO:0000250" key="1">
    <source>
        <dbReference type="UniProtKB" id="O75746"/>
    </source>
</evidence>
<evidence type="ECO:0000255" key="2">
    <source>
        <dbReference type="PROSITE-ProRule" id="PRU00282"/>
    </source>
</evidence>
<evidence type="ECO:0000255" key="3">
    <source>
        <dbReference type="PROSITE-ProRule" id="PRU00448"/>
    </source>
</evidence>
<evidence type="ECO:0000305" key="4"/>
<gene>
    <name type="ORF">K02F3.2</name>
</gene>
<feature type="chain" id="PRO_0000090603" description="Probable calcium-binding mitochondrial carrier K02F3.2">
    <location>
        <begin position="1"/>
        <end position="716"/>
    </location>
</feature>
<feature type="transmembrane region" description="Helical; Name=1" evidence="1">
    <location>
        <begin position="382"/>
        <end position="399"/>
    </location>
</feature>
<feature type="transmembrane region" description="Helical; Name=2" evidence="1">
    <location>
        <begin position="443"/>
        <end position="462"/>
    </location>
</feature>
<feature type="transmembrane region" description="Helical; Name=3" evidence="1">
    <location>
        <begin position="485"/>
        <end position="498"/>
    </location>
</feature>
<feature type="transmembrane region" description="Helical; Name=4" evidence="1">
    <location>
        <begin position="535"/>
        <end position="554"/>
    </location>
</feature>
<feature type="transmembrane region" description="Helical; Name=5" evidence="1">
    <location>
        <begin position="574"/>
        <end position="591"/>
    </location>
</feature>
<feature type="transmembrane region" description="Helical; Name=6" evidence="1">
    <location>
        <begin position="631"/>
        <end position="650"/>
    </location>
</feature>
<feature type="domain" description="EF-hand 1" evidence="3">
    <location>
        <begin position="93"/>
        <end position="121"/>
    </location>
</feature>
<feature type="domain" description="EF-hand 2" evidence="3">
    <location>
        <begin position="127"/>
        <end position="162"/>
    </location>
</feature>
<feature type="domain" description="EF-hand 3" evidence="4">
    <location>
        <begin position="165"/>
        <end position="195"/>
    </location>
</feature>
<feature type="domain" description="EF-hand 4" evidence="3">
    <location>
        <begin position="198"/>
        <end position="233"/>
    </location>
</feature>
<feature type="repeat" description="Solcar 1" evidence="2">
    <location>
        <begin position="376"/>
        <end position="468"/>
    </location>
</feature>
<feature type="repeat" description="Solcar 2" evidence="2">
    <location>
        <begin position="475"/>
        <end position="560"/>
    </location>
</feature>
<feature type="repeat" description="Solcar 3" evidence="2">
    <location>
        <begin position="568"/>
        <end position="656"/>
    </location>
</feature>
<feature type="region of interest" description="N-terminal domain" evidence="1">
    <location>
        <begin position="1"/>
        <end position="345"/>
    </location>
</feature>
<feature type="region of interest" description="Linker loop domain" evidence="1">
    <location>
        <begin position="346"/>
        <end position="362"/>
    </location>
</feature>
<feature type="region of interest" description="Carrier domain" evidence="1">
    <location>
        <begin position="372"/>
        <end position="664"/>
    </location>
</feature>
<feature type="region of interest" description="C-terminal domain" evidence="1">
    <location>
        <begin position="665"/>
        <end position="716"/>
    </location>
</feature>
<feature type="binding site" evidence="1">
    <location>
        <position position="106"/>
    </location>
    <ligand>
        <name>Ca(2+)</name>
        <dbReference type="ChEBI" id="CHEBI:29108"/>
        <label>1</label>
    </ligand>
</feature>
<feature type="binding site" evidence="1">
    <location>
        <position position="108"/>
    </location>
    <ligand>
        <name>Ca(2+)</name>
        <dbReference type="ChEBI" id="CHEBI:29108"/>
        <label>1</label>
    </ligand>
</feature>
<feature type="binding site" evidence="1">
    <location>
        <position position="110"/>
    </location>
    <ligand>
        <name>Ca(2+)</name>
        <dbReference type="ChEBI" id="CHEBI:29108"/>
        <label>1</label>
    </ligand>
</feature>
<feature type="binding site" evidence="1">
    <location>
        <position position="117"/>
    </location>
    <ligand>
        <name>Ca(2+)</name>
        <dbReference type="ChEBI" id="CHEBI:29108"/>
        <label>1</label>
    </ligand>
</feature>
<feature type="binding site" evidence="3">
    <location>
        <position position="140"/>
    </location>
    <ligand>
        <name>Ca(2+)</name>
        <dbReference type="ChEBI" id="CHEBI:29108"/>
        <label>2</label>
    </ligand>
</feature>
<feature type="binding site" evidence="3">
    <location>
        <position position="142"/>
    </location>
    <ligand>
        <name>Ca(2+)</name>
        <dbReference type="ChEBI" id="CHEBI:29108"/>
        <label>2</label>
    </ligand>
</feature>
<feature type="binding site" evidence="3">
    <location>
        <position position="144"/>
    </location>
    <ligand>
        <name>Ca(2+)</name>
        <dbReference type="ChEBI" id="CHEBI:29108"/>
        <label>2</label>
    </ligand>
</feature>
<feature type="binding site" evidence="3">
    <location>
        <position position="146"/>
    </location>
    <ligand>
        <name>Ca(2+)</name>
        <dbReference type="ChEBI" id="CHEBI:29108"/>
        <label>2</label>
    </ligand>
</feature>
<feature type="binding site" evidence="3">
    <location>
        <position position="151"/>
    </location>
    <ligand>
        <name>Ca(2+)</name>
        <dbReference type="ChEBI" id="CHEBI:29108"/>
        <label>2</label>
    </ligand>
</feature>
<feature type="binding site" evidence="3">
    <location>
        <position position="211"/>
    </location>
    <ligand>
        <name>Ca(2+)</name>
        <dbReference type="ChEBI" id="CHEBI:29108"/>
        <label>3</label>
    </ligand>
</feature>
<feature type="binding site" evidence="3">
    <location>
        <position position="213"/>
    </location>
    <ligand>
        <name>Ca(2+)</name>
        <dbReference type="ChEBI" id="CHEBI:29108"/>
        <label>3</label>
    </ligand>
</feature>
<feature type="binding site" evidence="3">
    <location>
        <position position="215"/>
    </location>
    <ligand>
        <name>Ca(2+)</name>
        <dbReference type="ChEBI" id="CHEBI:29108"/>
        <label>3</label>
    </ligand>
</feature>
<feature type="binding site" evidence="3">
    <location>
        <position position="217"/>
    </location>
    <ligand>
        <name>Ca(2+)</name>
        <dbReference type="ChEBI" id="CHEBI:29108"/>
        <label>3</label>
    </ligand>
</feature>
<feature type="binding site" evidence="3">
    <location>
        <position position="222"/>
    </location>
    <ligand>
        <name>Ca(2+)</name>
        <dbReference type="ChEBI" id="CHEBI:29108"/>
        <label>3</label>
    </ligand>
</feature>
<feature type="splice variant" id="VSP_053225" description="In isoform a." evidence="4">
    <location>
        <begin position="256"/>
        <end position="263"/>
    </location>
</feature>
<proteinExistence type="inferred from homology"/>